<organism>
    <name type="scientific">Anaplasma phagocytophilum (strain HZ)</name>
    <dbReference type="NCBI Taxonomy" id="212042"/>
    <lineage>
        <taxon>Bacteria</taxon>
        <taxon>Pseudomonadati</taxon>
        <taxon>Pseudomonadota</taxon>
        <taxon>Alphaproteobacteria</taxon>
        <taxon>Rickettsiales</taxon>
        <taxon>Anaplasmataceae</taxon>
        <taxon>Anaplasma</taxon>
        <taxon>phagocytophilum group</taxon>
    </lineage>
</organism>
<proteinExistence type="inferred from homology"/>
<dbReference type="EC" id="2.8.4.3" evidence="1"/>
<dbReference type="EMBL" id="CP000235">
    <property type="protein sequence ID" value="ABD43380.1"/>
    <property type="molecule type" value="Genomic_DNA"/>
</dbReference>
<dbReference type="RefSeq" id="WP_011450970.1">
    <property type="nucleotide sequence ID" value="NC_007797.1"/>
</dbReference>
<dbReference type="SMR" id="Q2GJJ5"/>
<dbReference type="STRING" id="212042.APH_0880"/>
<dbReference type="PaxDb" id="212042-APH_0880"/>
<dbReference type="EnsemblBacteria" id="ABD43380">
    <property type="protein sequence ID" value="ABD43380"/>
    <property type="gene ID" value="APH_0880"/>
</dbReference>
<dbReference type="GeneID" id="92748135"/>
<dbReference type="KEGG" id="aph:APH_0880"/>
<dbReference type="eggNOG" id="COG0621">
    <property type="taxonomic scope" value="Bacteria"/>
</dbReference>
<dbReference type="HOGENOM" id="CLU_018697_2_2_5"/>
<dbReference type="Proteomes" id="UP000001943">
    <property type="component" value="Chromosome"/>
</dbReference>
<dbReference type="GO" id="GO:0005829">
    <property type="term" value="C:cytosol"/>
    <property type="evidence" value="ECO:0007669"/>
    <property type="project" value="TreeGrafter"/>
</dbReference>
<dbReference type="GO" id="GO:0051539">
    <property type="term" value="F:4 iron, 4 sulfur cluster binding"/>
    <property type="evidence" value="ECO:0007669"/>
    <property type="project" value="UniProtKB-UniRule"/>
</dbReference>
<dbReference type="GO" id="GO:0046872">
    <property type="term" value="F:metal ion binding"/>
    <property type="evidence" value="ECO:0007669"/>
    <property type="project" value="UniProtKB-KW"/>
</dbReference>
<dbReference type="GO" id="GO:0035597">
    <property type="term" value="F:N6-isopentenyladenosine methylthiotransferase activity"/>
    <property type="evidence" value="ECO:0007669"/>
    <property type="project" value="TreeGrafter"/>
</dbReference>
<dbReference type="CDD" id="cd01335">
    <property type="entry name" value="Radical_SAM"/>
    <property type="match status" value="1"/>
</dbReference>
<dbReference type="FunFam" id="3.40.50.12160:FF:000003">
    <property type="entry name" value="CDK5 regulatory subunit-associated protein 1"/>
    <property type="match status" value="1"/>
</dbReference>
<dbReference type="FunFam" id="3.80.30.20:FF:000001">
    <property type="entry name" value="tRNA-2-methylthio-N(6)-dimethylallyladenosine synthase 2"/>
    <property type="match status" value="1"/>
</dbReference>
<dbReference type="Gene3D" id="3.40.50.12160">
    <property type="entry name" value="Methylthiotransferase, N-terminal domain"/>
    <property type="match status" value="1"/>
</dbReference>
<dbReference type="Gene3D" id="3.80.30.20">
    <property type="entry name" value="tm_1862 like domain"/>
    <property type="match status" value="1"/>
</dbReference>
<dbReference type="HAMAP" id="MF_01864">
    <property type="entry name" value="tRNA_metthiotr_MiaB"/>
    <property type="match status" value="1"/>
</dbReference>
<dbReference type="InterPro" id="IPR006638">
    <property type="entry name" value="Elp3/MiaA/NifB-like_rSAM"/>
</dbReference>
<dbReference type="InterPro" id="IPR005839">
    <property type="entry name" value="Methylthiotransferase"/>
</dbReference>
<dbReference type="InterPro" id="IPR020612">
    <property type="entry name" value="Methylthiotransferase_CS"/>
</dbReference>
<dbReference type="InterPro" id="IPR013848">
    <property type="entry name" value="Methylthiotransferase_N"/>
</dbReference>
<dbReference type="InterPro" id="IPR038135">
    <property type="entry name" value="Methylthiotransferase_N_sf"/>
</dbReference>
<dbReference type="InterPro" id="IPR006463">
    <property type="entry name" value="MiaB_methiolase"/>
</dbReference>
<dbReference type="InterPro" id="IPR007197">
    <property type="entry name" value="rSAM"/>
</dbReference>
<dbReference type="InterPro" id="IPR023404">
    <property type="entry name" value="rSAM_horseshoe"/>
</dbReference>
<dbReference type="InterPro" id="IPR002792">
    <property type="entry name" value="TRAM_dom"/>
</dbReference>
<dbReference type="NCBIfam" id="TIGR01574">
    <property type="entry name" value="miaB-methiolase"/>
    <property type="match status" value="1"/>
</dbReference>
<dbReference type="NCBIfam" id="TIGR00089">
    <property type="entry name" value="MiaB/RimO family radical SAM methylthiotransferase"/>
    <property type="match status" value="1"/>
</dbReference>
<dbReference type="PANTHER" id="PTHR43020">
    <property type="entry name" value="CDK5 REGULATORY SUBUNIT-ASSOCIATED PROTEIN 1"/>
    <property type="match status" value="1"/>
</dbReference>
<dbReference type="PANTHER" id="PTHR43020:SF2">
    <property type="entry name" value="MITOCHONDRIAL TRNA METHYLTHIOTRANSFERASE CDK5RAP1"/>
    <property type="match status" value="1"/>
</dbReference>
<dbReference type="Pfam" id="PF04055">
    <property type="entry name" value="Radical_SAM"/>
    <property type="match status" value="1"/>
</dbReference>
<dbReference type="Pfam" id="PF00919">
    <property type="entry name" value="UPF0004"/>
    <property type="match status" value="1"/>
</dbReference>
<dbReference type="SFLD" id="SFLDF00273">
    <property type="entry name" value="(dimethylallyl)adenosine_tRNA"/>
    <property type="match status" value="1"/>
</dbReference>
<dbReference type="SFLD" id="SFLDG01082">
    <property type="entry name" value="B12-binding_domain_containing"/>
    <property type="match status" value="1"/>
</dbReference>
<dbReference type="SFLD" id="SFLDG01061">
    <property type="entry name" value="methylthiotransferase"/>
    <property type="match status" value="1"/>
</dbReference>
<dbReference type="SMART" id="SM00729">
    <property type="entry name" value="Elp3"/>
    <property type="match status" value="1"/>
</dbReference>
<dbReference type="SUPFAM" id="SSF102114">
    <property type="entry name" value="Radical SAM enzymes"/>
    <property type="match status" value="1"/>
</dbReference>
<dbReference type="PROSITE" id="PS51449">
    <property type="entry name" value="MTTASE_N"/>
    <property type="match status" value="1"/>
</dbReference>
<dbReference type="PROSITE" id="PS01278">
    <property type="entry name" value="MTTASE_RADICAL"/>
    <property type="match status" value="1"/>
</dbReference>
<dbReference type="PROSITE" id="PS51918">
    <property type="entry name" value="RADICAL_SAM"/>
    <property type="match status" value="1"/>
</dbReference>
<dbReference type="PROSITE" id="PS50926">
    <property type="entry name" value="TRAM"/>
    <property type="match status" value="1"/>
</dbReference>
<feature type="chain" id="PRO_0000374114" description="tRNA-2-methylthio-N(6)-dimethylallyladenosine synthase">
    <location>
        <begin position="1"/>
        <end position="444"/>
    </location>
</feature>
<feature type="domain" description="MTTase N-terminal" evidence="1">
    <location>
        <begin position="3"/>
        <end position="117"/>
    </location>
</feature>
<feature type="domain" description="Radical SAM core" evidence="2">
    <location>
        <begin position="141"/>
        <end position="374"/>
    </location>
</feature>
<feature type="domain" description="TRAM" evidence="1">
    <location>
        <begin position="375"/>
        <end position="441"/>
    </location>
</feature>
<feature type="binding site" evidence="1">
    <location>
        <position position="12"/>
    </location>
    <ligand>
        <name>[4Fe-4S] cluster</name>
        <dbReference type="ChEBI" id="CHEBI:49883"/>
        <label>1</label>
    </ligand>
</feature>
<feature type="binding site" evidence="1">
    <location>
        <position position="48"/>
    </location>
    <ligand>
        <name>[4Fe-4S] cluster</name>
        <dbReference type="ChEBI" id="CHEBI:49883"/>
        <label>1</label>
    </ligand>
</feature>
<feature type="binding site" evidence="1">
    <location>
        <position position="80"/>
    </location>
    <ligand>
        <name>[4Fe-4S] cluster</name>
        <dbReference type="ChEBI" id="CHEBI:49883"/>
        <label>1</label>
    </ligand>
</feature>
<feature type="binding site" evidence="1">
    <location>
        <position position="155"/>
    </location>
    <ligand>
        <name>[4Fe-4S] cluster</name>
        <dbReference type="ChEBI" id="CHEBI:49883"/>
        <label>2</label>
        <note>4Fe-4S-S-AdoMet</note>
    </ligand>
</feature>
<feature type="binding site" evidence="1">
    <location>
        <position position="159"/>
    </location>
    <ligand>
        <name>[4Fe-4S] cluster</name>
        <dbReference type="ChEBI" id="CHEBI:49883"/>
        <label>2</label>
        <note>4Fe-4S-S-AdoMet</note>
    </ligand>
</feature>
<feature type="binding site" evidence="1">
    <location>
        <position position="162"/>
    </location>
    <ligand>
        <name>[4Fe-4S] cluster</name>
        <dbReference type="ChEBI" id="CHEBI:49883"/>
        <label>2</label>
        <note>4Fe-4S-S-AdoMet</note>
    </ligand>
</feature>
<accession>Q2GJJ5</accession>
<sequence length="444" mass="49838">MTRGLYIESYGCQMNVYDALMMEDLLRPVGYAAVSRPEDADIILINTCHIREKASEKLYSTLGRMRVIKKEECILIVAGCVAQAEGEAVFERAPYVNVVVGPQGLHTLPELIMKVKRDKKQINIEFPVVSKFDAISIDRKANGGVSAYVSIQEGCDKFCTFCVVPYTRGPEYSRDVEAILEEVKQLTDRGTKEIVLIGQNVNAYHGTYKGNEWDLGKLIQKVSLIDGVERIRYTTSHPRDMHPSLYEAHRDEKKLAPFVHLPVQSGSDAILRKMNRKHTAEEYLRVVEQLKDSNKNMALSSDFIVGFPGETEKDFEETMKLVESVGFALSYSFKYSPRPGTPGAEYSNQVPEEEKSARLAALQGLLTKQQLQFNKSMEGRVMDVLVGDPSSMRSDRIFGKSEYTQSIHISAPSGSEDCFNRMVRVEILHGRQNSLEGTVLSNAN</sequence>
<evidence type="ECO:0000255" key="1">
    <source>
        <dbReference type="HAMAP-Rule" id="MF_01864"/>
    </source>
</evidence>
<evidence type="ECO:0000255" key="2">
    <source>
        <dbReference type="PROSITE-ProRule" id="PRU01266"/>
    </source>
</evidence>
<keyword id="KW-0004">4Fe-4S</keyword>
<keyword id="KW-0963">Cytoplasm</keyword>
<keyword id="KW-0408">Iron</keyword>
<keyword id="KW-0411">Iron-sulfur</keyword>
<keyword id="KW-0479">Metal-binding</keyword>
<keyword id="KW-0949">S-adenosyl-L-methionine</keyword>
<keyword id="KW-0808">Transferase</keyword>
<keyword id="KW-0819">tRNA processing</keyword>
<protein>
    <recommendedName>
        <fullName evidence="1">tRNA-2-methylthio-N(6)-dimethylallyladenosine synthase</fullName>
        <ecNumber evidence="1">2.8.4.3</ecNumber>
    </recommendedName>
    <alternativeName>
        <fullName evidence="1">(Dimethylallyl)adenosine tRNA methylthiotransferase MiaB</fullName>
    </alternativeName>
    <alternativeName>
        <fullName evidence="1">tRNA-i(6)A37 methylthiotransferase</fullName>
    </alternativeName>
</protein>
<reference key="1">
    <citation type="journal article" date="2006" name="PLoS Genet.">
        <title>Comparative genomics of emerging human ehrlichiosis agents.</title>
        <authorList>
            <person name="Dunning Hotopp J.C."/>
            <person name="Lin M."/>
            <person name="Madupu R."/>
            <person name="Crabtree J."/>
            <person name="Angiuoli S.V."/>
            <person name="Eisen J.A."/>
            <person name="Seshadri R."/>
            <person name="Ren Q."/>
            <person name="Wu M."/>
            <person name="Utterback T.R."/>
            <person name="Smith S."/>
            <person name="Lewis M."/>
            <person name="Khouri H."/>
            <person name="Zhang C."/>
            <person name="Niu H."/>
            <person name="Lin Q."/>
            <person name="Ohashi N."/>
            <person name="Zhi N."/>
            <person name="Nelson W.C."/>
            <person name="Brinkac L.M."/>
            <person name="Dodson R.J."/>
            <person name="Rosovitz M.J."/>
            <person name="Sundaram J.P."/>
            <person name="Daugherty S.C."/>
            <person name="Davidsen T."/>
            <person name="Durkin A.S."/>
            <person name="Gwinn M.L."/>
            <person name="Haft D.H."/>
            <person name="Selengut J.D."/>
            <person name="Sullivan S.A."/>
            <person name="Zafar N."/>
            <person name="Zhou L."/>
            <person name="Benahmed F."/>
            <person name="Forberger H."/>
            <person name="Halpin R."/>
            <person name="Mulligan S."/>
            <person name="Robinson J."/>
            <person name="White O."/>
            <person name="Rikihisa Y."/>
            <person name="Tettelin H."/>
        </authorList>
    </citation>
    <scope>NUCLEOTIDE SEQUENCE [LARGE SCALE GENOMIC DNA]</scope>
    <source>
        <strain>HZ</strain>
    </source>
</reference>
<comment type="function">
    <text evidence="1">Catalyzes the methylthiolation of N6-(dimethylallyl)adenosine (i(6)A), leading to the formation of 2-methylthio-N6-(dimethylallyl)adenosine (ms(2)i(6)A) at position 37 in tRNAs that read codons beginning with uridine.</text>
</comment>
<comment type="catalytic activity">
    <reaction evidence="1">
        <text>N(6)-dimethylallyladenosine(37) in tRNA + (sulfur carrier)-SH + AH2 + 2 S-adenosyl-L-methionine = 2-methylsulfanyl-N(6)-dimethylallyladenosine(37) in tRNA + (sulfur carrier)-H + 5'-deoxyadenosine + L-methionine + A + S-adenosyl-L-homocysteine + 2 H(+)</text>
        <dbReference type="Rhea" id="RHEA:37067"/>
        <dbReference type="Rhea" id="RHEA-COMP:10375"/>
        <dbReference type="Rhea" id="RHEA-COMP:10376"/>
        <dbReference type="Rhea" id="RHEA-COMP:14737"/>
        <dbReference type="Rhea" id="RHEA-COMP:14739"/>
        <dbReference type="ChEBI" id="CHEBI:13193"/>
        <dbReference type="ChEBI" id="CHEBI:15378"/>
        <dbReference type="ChEBI" id="CHEBI:17319"/>
        <dbReference type="ChEBI" id="CHEBI:17499"/>
        <dbReference type="ChEBI" id="CHEBI:29917"/>
        <dbReference type="ChEBI" id="CHEBI:57844"/>
        <dbReference type="ChEBI" id="CHEBI:57856"/>
        <dbReference type="ChEBI" id="CHEBI:59789"/>
        <dbReference type="ChEBI" id="CHEBI:64428"/>
        <dbReference type="ChEBI" id="CHEBI:74415"/>
        <dbReference type="ChEBI" id="CHEBI:74417"/>
        <dbReference type="EC" id="2.8.4.3"/>
    </reaction>
</comment>
<comment type="cofactor">
    <cofactor evidence="1">
        <name>[4Fe-4S] cluster</name>
        <dbReference type="ChEBI" id="CHEBI:49883"/>
    </cofactor>
    <text evidence="1">Binds 2 [4Fe-4S] clusters. One cluster is coordinated with 3 cysteines and an exchangeable S-adenosyl-L-methionine.</text>
</comment>
<comment type="subunit">
    <text evidence="1">Monomer.</text>
</comment>
<comment type="subcellular location">
    <subcellularLocation>
        <location evidence="1">Cytoplasm</location>
    </subcellularLocation>
</comment>
<comment type="similarity">
    <text evidence="1">Belongs to the methylthiotransferase family. MiaB subfamily.</text>
</comment>
<gene>
    <name evidence="1" type="primary">miaB</name>
    <name type="ordered locus">APH_0880</name>
</gene>
<name>MIAB_ANAPZ</name>